<comment type="function">
    <text evidence="2">Transfers a succinyl group from succinyl-CoA to L-homoserine, forming succinyl-L-homoserine.</text>
</comment>
<comment type="catalytic activity">
    <reaction evidence="2">
        <text>L-homoserine + succinyl-CoA = O-succinyl-L-homoserine + CoA</text>
        <dbReference type="Rhea" id="RHEA:22008"/>
        <dbReference type="ChEBI" id="CHEBI:57287"/>
        <dbReference type="ChEBI" id="CHEBI:57292"/>
        <dbReference type="ChEBI" id="CHEBI:57476"/>
        <dbReference type="ChEBI" id="CHEBI:57661"/>
        <dbReference type="EC" id="2.3.1.46"/>
    </reaction>
</comment>
<comment type="pathway">
    <text evidence="2">Amino-acid biosynthesis; L-methionine biosynthesis via de novo pathway; O-succinyl-L-homoserine from L-homoserine: step 1/1.</text>
</comment>
<comment type="subunit">
    <text evidence="2">Homodimer.</text>
</comment>
<comment type="subcellular location">
    <subcellularLocation>
        <location evidence="2">Cytoplasm</location>
    </subcellularLocation>
</comment>
<comment type="similarity">
    <text evidence="2">Belongs to the MetA family.</text>
</comment>
<accession>P37413</accession>
<organism>
    <name type="scientific">Salmonella typhimurium (strain LT2 / SGSC1412 / ATCC 700720)</name>
    <dbReference type="NCBI Taxonomy" id="99287"/>
    <lineage>
        <taxon>Bacteria</taxon>
        <taxon>Pseudomonadati</taxon>
        <taxon>Pseudomonadota</taxon>
        <taxon>Gammaproteobacteria</taxon>
        <taxon>Enterobacterales</taxon>
        <taxon>Enterobacteriaceae</taxon>
        <taxon>Salmonella</taxon>
    </lineage>
</organism>
<name>METAS_SALTY</name>
<keyword id="KW-0012">Acyltransferase</keyword>
<keyword id="KW-0028">Amino-acid biosynthesis</keyword>
<keyword id="KW-0963">Cytoplasm</keyword>
<keyword id="KW-0486">Methionine biosynthesis</keyword>
<keyword id="KW-1185">Reference proteome</keyword>
<keyword id="KW-0808">Transferase</keyword>
<sequence length="309" mass="35670">MPIRVLDELPAVNFLREENVFVMTTSRASGQEIRPLKVLILNLMPKKIETENQFLRLLSNSPLQVDIQLLRIDARESRNTPAEHLNNFYCNFDDICDQNFDGLIVTGAPLGLVEFNDVAYWPQIRQVLEWAKDHVTSTLFVCWAVQAALNILYGIPKQTRTDKLSGVYEHHILHPHALLTRGFDDSFLAPHSRYADFPAALIRDYTDLEILAETEEGDAYLFASKDKRIAFVTGHPEYDAHTLAGEYFRDVEAGLNPEVPYNYFPKNDPQNIPRATWRSHGNLLFTNWLNYYVYQITPYDLRHMNPTLD</sequence>
<gene>
    <name evidence="2" type="primary">metAS</name>
    <name type="synonym">metA</name>
    <name type="ordered locus">STM4182</name>
</gene>
<feature type="initiator methionine" description="Removed" evidence="1">
    <location>
        <position position="1"/>
    </location>
</feature>
<feature type="chain" id="PRO_0000199758" description="Homoserine O-succinyltransferase">
    <location>
        <begin position="2"/>
        <end position="309"/>
    </location>
</feature>
<feature type="active site" description="Acyl-thioester intermediate" evidence="2">
    <location>
        <position position="142"/>
    </location>
</feature>
<feature type="active site" description="Proton acceptor" evidence="2">
    <location>
        <position position="235"/>
    </location>
</feature>
<feature type="active site" evidence="2">
    <location>
        <position position="237"/>
    </location>
</feature>
<feature type="binding site" evidence="2">
    <location>
        <position position="163"/>
    </location>
    <ligand>
        <name>substrate</name>
    </ligand>
</feature>
<feature type="binding site" evidence="2">
    <location>
        <position position="192"/>
    </location>
    <ligand>
        <name>substrate</name>
    </ligand>
</feature>
<feature type="binding site" evidence="2">
    <location>
        <position position="249"/>
    </location>
    <ligand>
        <name>substrate</name>
    </ligand>
</feature>
<feature type="site" description="Important for acyl-CoA specificity" evidence="2">
    <location>
        <position position="111"/>
    </location>
</feature>
<feature type="site" description="Important for substrate specificity" evidence="2">
    <location>
        <position position="192"/>
    </location>
</feature>
<feature type="sequence conflict" description="In Ref. 2; AAA27161." evidence="3" ref="2">
    <original>V</original>
    <variation>D</variation>
    <location>
        <position position="22"/>
    </location>
</feature>
<feature type="sequence conflict" description="In Ref. 2; AAA27161." evidence="3" ref="2">
    <original>N</original>
    <variation>I</variation>
    <location>
        <position position="52"/>
    </location>
</feature>
<evidence type="ECO:0000250" key="1"/>
<evidence type="ECO:0000255" key="2">
    <source>
        <dbReference type="HAMAP-Rule" id="MF_00295"/>
    </source>
</evidence>
<evidence type="ECO:0000305" key="3"/>
<reference key="1">
    <citation type="journal article" date="2001" name="Nature">
        <title>Complete genome sequence of Salmonella enterica serovar Typhimurium LT2.</title>
        <authorList>
            <person name="McClelland M."/>
            <person name="Sanderson K.E."/>
            <person name="Spieth J."/>
            <person name="Clifton S.W."/>
            <person name="Latreille P."/>
            <person name="Courtney L."/>
            <person name="Porwollik S."/>
            <person name="Ali J."/>
            <person name="Dante M."/>
            <person name="Du F."/>
            <person name="Hou S."/>
            <person name="Layman D."/>
            <person name="Leonard S."/>
            <person name="Nguyen C."/>
            <person name="Scott K."/>
            <person name="Holmes A."/>
            <person name="Grewal N."/>
            <person name="Mulvaney E."/>
            <person name="Ryan E."/>
            <person name="Sun H."/>
            <person name="Florea L."/>
            <person name="Miller W."/>
            <person name="Stoneking T."/>
            <person name="Nhan M."/>
            <person name="Waterston R."/>
            <person name="Wilson R.K."/>
        </authorList>
    </citation>
    <scope>NUCLEOTIDE SEQUENCE [LARGE SCALE GENOMIC DNA]</scope>
    <source>
        <strain>LT2 / SGSC1412 / ATCC 700720</strain>
    </source>
</reference>
<reference key="2">
    <citation type="journal article" date="1992" name="J. Bacteriol.">
        <title>Regulation of the Salmonella typhimurium metA gene by the metR protein and homocysteine.</title>
        <authorList>
            <person name="Mares R."/>
            <person name="Urbanowski M.L."/>
            <person name="Stauffer G.V."/>
        </authorList>
    </citation>
    <scope>NUCLEOTIDE SEQUENCE [GENOMIC DNA] OF 1-69</scope>
</reference>
<proteinExistence type="inferred from homology"/>
<dbReference type="EC" id="2.3.1.46" evidence="2"/>
<dbReference type="EMBL" id="AE006468">
    <property type="protein sequence ID" value="AAL23006.1"/>
    <property type="molecule type" value="Genomic_DNA"/>
</dbReference>
<dbReference type="EMBL" id="M74188">
    <property type="protein sequence ID" value="AAA27161.1"/>
    <property type="molecule type" value="Genomic_DNA"/>
</dbReference>
<dbReference type="RefSeq" id="NP_463047.1">
    <property type="nucleotide sequence ID" value="NC_003197.2"/>
</dbReference>
<dbReference type="RefSeq" id="WP_001122767.1">
    <property type="nucleotide sequence ID" value="NC_003197.2"/>
</dbReference>
<dbReference type="SMR" id="P37413"/>
<dbReference type="STRING" id="99287.STM4182"/>
<dbReference type="PaxDb" id="99287-STM4182"/>
<dbReference type="GeneID" id="1255708"/>
<dbReference type="KEGG" id="stm:STM4182"/>
<dbReference type="PATRIC" id="fig|99287.12.peg.4394"/>
<dbReference type="HOGENOM" id="CLU_057851_0_1_6"/>
<dbReference type="OMA" id="CSCLATH"/>
<dbReference type="PhylomeDB" id="P37413"/>
<dbReference type="BioCyc" id="SENT99287:STM4182-MONOMER"/>
<dbReference type="UniPathway" id="UPA00051">
    <property type="reaction ID" value="UER00075"/>
</dbReference>
<dbReference type="PHI-base" id="PHI:8126"/>
<dbReference type="Proteomes" id="UP000001014">
    <property type="component" value="Chromosome"/>
</dbReference>
<dbReference type="GO" id="GO:0005737">
    <property type="term" value="C:cytoplasm"/>
    <property type="evidence" value="ECO:0007669"/>
    <property type="project" value="UniProtKB-SubCell"/>
</dbReference>
<dbReference type="GO" id="GO:0004414">
    <property type="term" value="F:homoserine O-acetyltransferase activity"/>
    <property type="evidence" value="ECO:0007669"/>
    <property type="project" value="UniProtKB-UniRule"/>
</dbReference>
<dbReference type="GO" id="GO:0008899">
    <property type="term" value="F:homoserine O-succinyltransferase activity"/>
    <property type="evidence" value="ECO:0000318"/>
    <property type="project" value="GO_Central"/>
</dbReference>
<dbReference type="GO" id="GO:0019281">
    <property type="term" value="P:L-methionine biosynthetic process from homoserine via O-succinyl-L-homoserine and cystathionine"/>
    <property type="evidence" value="ECO:0007669"/>
    <property type="project" value="InterPro"/>
</dbReference>
<dbReference type="CDD" id="cd03131">
    <property type="entry name" value="GATase1_HTS"/>
    <property type="match status" value="1"/>
</dbReference>
<dbReference type="FunFam" id="3.40.50.880:FF:000004">
    <property type="entry name" value="Homoserine O-succinyltransferase"/>
    <property type="match status" value="1"/>
</dbReference>
<dbReference type="Gene3D" id="3.40.50.880">
    <property type="match status" value="1"/>
</dbReference>
<dbReference type="HAMAP" id="MF_00295">
    <property type="entry name" value="MetA_acyltransf"/>
    <property type="match status" value="1"/>
</dbReference>
<dbReference type="InterPro" id="IPR029062">
    <property type="entry name" value="Class_I_gatase-like"/>
</dbReference>
<dbReference type="InterPro" id="IPR005697">
    <property type="entry name" value="HST_MetA"/>
</dbReference>
<dbReference type="InterPro" id="IPR033752">
    <property type="entry name" value="MetA_family"/>
</dbReference>
<dbReference type="NCBIfam" id="TIGR01001">
    <property type="entry name" value="metA"/>
    <property type="match status" value="1"/>
</dbReference>
<dbReference type="PANTHER" id="PTHR20919">
    <property type="entry name" value="HOMOSERINE O-SUCCINYLTRANSFERASE"/>
    <property type="match status" value="1"/>
</dbReference>
<dbReference type="PANTHER" id="PTHR20919:SF0">
    <property type="entry name" value="HOMOSERINE O-SUCCINYLTRANSFERASE"/>
    <property type="match status" value="1"/>
</dbReference>
<dbReference type="Pfam" id="PF04204">
    <property type="entry name" value="HTS"/>
    <property type="match status" value="1"/>
</dbReference>
<dbReference type="PIRSF" id="PIRSF000450">
    <property type="entry name" value="H_ser_succinyltr"/>
    <property type="match status" value="1"/>
</dbReference>
<dbReference type="SUPFAM" id="SSF52317">
    <property type="entry name" value="Class I glutamine amidotransferase-like"/>
    <property type="match status" value="1"/>
</dbReference>
<protein>
    <recommendedName>
        <fullName evidence="2">Homoserine O-succinyltransferase</fullName>
        <shortName evidence="2">HST</shortName>
        <ecNumber evidence="2">2.3.1.46</ecNumber>
    </recommendedName>
    <alternativeName>
        <fullName evidence="2">Homoserine transsuccinylase</fullName>
        <shortName evidence="2">HTS</shortName>
    </alternativeName>
</protein>